<accession>P33349</accession>
<accession>P33350</accession>
<accession>P33351</accession>
<accession>P76431</accession>
<accession>Q2MAW0</accession>
<organism>
    <name type="scientific">Escherichia coli (strain K12)</name>
    <dbReference type="NCBI Taxonomy" id="83333"/>
    <lineage>
        <taxon>Bacteria</taxon>
        <taxon>Pseudomonadati</taxon>
        <taxon>Pseudomonadota</taxon>
        <taxon>Gammaproteobacteria</taxon>
        <taxon>Enterobacterales</taxon>
        <taxon>Enterobacteriaceae</taxon>
        <taxon>Escherichia</taxon>
    </lineage>
</organism>
<keyword id="KW-1185">Reference proteome</keyword>
<reference key="1">
    <citation type="submission" date="1993-10" db="EMBL/GenBank/DDBJ databases">
        <title>Automated multiplex sequencing of the E.coli genome.</title>
        <authorList>
            <person name="Richterich P."/>
            <person name="Lakey N."/>
            <person name="Gryan G."/>
            <person name="Jaehn L."/>
            <person name="Mintz L."/>
            <person name="Robison K."/>
            <person name="Church G.M."/>
        </authorList>
    </citation>
    <scope>NUCLEOTIDE SEQUENCE [LARGE SCALE GENOMIC DNA]</scope>
    <source>
        <strain>K12 / BHB2600</strain>
    </source>
</reference>
<reference key="2">
    <citation type="journal article" date="1997" name="Science">
        <title>The complete genome sequence of Escherichia coli K-12.</title>
        <authorList>
            <person name="Blattner F.R."/>
            <person name="Plunkett G. III"/>
            <person name="Bloch C.A."/>
            <person name="Perna N.T."/>
            <person name="Burland V."/>
            <person name="Riley M."/>
            <person name="Collado-Vides J."/>
            <person name="Glasner J.D."/>
            <person name="Rode C.K."/>
            <person name="Mayhew G.F."/>
            <person name="Gregor J."/>
            <person name="Davis N.W."/>
            <person name="Kirkpatrick H.A."/>
            <person name="Goeden M.A."/>
            <person name="Rose D.J."/>
            <person name="Mau B."/>
            <person name="Shao Y."/>
        </authorList>
    </citation>
    <scope>NUCLEOTIDE SEQUENCE [LARGE SCALE GENOMIC DNA]</scope>
    <source>
        <strain>K12 / MG1655 / ATCC 47076</strain>
    </source>
</reference>
<reference key="3">
    <citation type="journal article" date="2006" name="Mol. Syst. Biol.">
        <title>Highly accurate genome sequences of Escherichia coli K-12 strains MG1655 and W3110.</title>
        <authorList>
            <person name="Hayashi K."/>
            <person name="Morooka N."/>
            <person name="Yamamoto Y."/>
            <person name="Fujita K."/>
            <person name="Isono K."/>
            <person name="Choi S."/>
            <person name="Ohtsubo E."/>
            <person name="Baba T."/>
            <person name="Wanner B.L."/>
            <person name="Mori H."/>
            <person name="Horiuchi T."/>
        </authorList>
    </citation>
    <scope>NUCLEOTIDE SEQUENCE [LARGE SCALE GENOMIC DNA]</scope>
    <source>
        <strain>K12 / W3110 / ATCC 27325 / DSM 5911</strain>
    </source>
</reference>
<gene>
    <name type="primary">yehM</name>
    <name type="synonym">yehN</name>
    <name type="synonym">yehO</name>
    <name type="ordered locus">b2120</name>
    <name type="ordered locus">JW2108</name>
</gene>
<proteinExistence type="predicted"/>
<name>YEHM_ECOLI</name>
<comment type="sequence caution" evidence="1">
    <conflict type="frameshift">
        <sequence resource="EMBL-CDS" id="AAA60483"/>
    </conflict>
    <text>Produces three separate ORFs.</text>
</comment>
<sequence>MSEPLIVGIRHHSPACARLVKSLIESQRPRYVLIEGPADFNDRVDELFLAHQLPVAIYSYCQYQDGAAPGRGAWTPFAEFSPEWQALQAARRIQAQTYFIDLPCWAQSEEEDDSPDTQDESQALLLRATRMDNSDTLWDHLFEDESQQTALPSALAHYFAQLRGDASGDALNRQREAFMARWIGWAMQQNNGDVLVVCGGWHAPALAKMWRECPQKINKPELPSLADAVTGCYLTPYSEKRLDVLAGYLSGMPAPVWQNWCWQWGLQKAGEQLLKTILTRLRQHKLPASTADMAAAHLHAMALAQLRGHTLPLRTDWLDAIAGSLIKEALNAPLPWSYRGVIHPDTDPILLTLIDTLAGDGFGKLAPSTPQPPLPKDVTCELERTAISLPAELTLNRFTPDGLAQSQVLHRLAILEIPGIVRQQGSTLTLAGNGEERWKLTRPLSQHAALIEAACFGATLQEAARNKLEADMLDAGGIGSITTCLSQAALAGLASFSQQLLEQLTLLIAQENQFAEMGQALEVLYALWRLDEISGMQGAQILQTTLCATIDRTLWLCESNGRPDEKEFHAHLHSWQALCHILRDLHSGVNLPGVSLSAAVALLERRSQAIHAPALDRGAALGALMRLEHPNASAEAALTMLAQLSPAQSGEALHGLLALARHQLACQPAFIAGFSSHLNQLSEADFINALPDLRAAMAWLPPRERGTLAHQVLEHYQLAQLPVSALQMPLHCPPQAIAHHQQLEQQALASLQNWGVFHV</sequence>
<evidence type="ECO:0000305" key="1"/>
<dbReference type="EMBL" id="U00007">
    <property type="protein sequence ID" value="AAA60481.1"/>
    <property type="status" value="ALT_FRAME"/>
    <property type="molecule type" value="Genomic_DNA"/>
</dbReference>
<dbReference type="EMBL" id="U00007">
    <property type="protein sequence ID" value="AAA60482.1"/>
    <property type="status" value="ALT_FRAME"/>
    <property type="molecule type" value="Genomic_DNA"/>
</dbReference>
<dbReference type="EMBL" id="U00007">
    <property type="protein sequence ID" value="AAA60483.1"/>
    <property type="status" value="ALT_FRAME"/>
    <property type="molecule type" value="Genomic_DNA"/>
</dbReference>
<dbReference type="EMBL" id="U00096">
    <property type="protein sequence ID" value="AAC75181.1"/>
    <property type="molecule type" value="Genomic_DNA"/>
</dbReference>
<dbReference type="EMBL" id="AP009048">
    <property type="protein sequence ID" value="BAE76596.1"/>
    <property type="molecule type" value="Genomic_DNA"/>
</dbReference>
<dbReference type="PIR" id="G64979">
    <property type="entry name" value="G64979"/>
</dbReference>
<dbReference type="RefSeq" id="NP_416624.1">
    <property type="nucleotide sequence ID" value="NC_000913.3"/>
</dbReference>
<dbReference type="RefSeq" id="WP_001294387.1">
    <property type="nucleotide sequence ID" value="NZ_LN832404.1"/>
</dbReference>
<dbReference type="BioGRID" id="4260441">
    <property type="interactions" value="18"/>
</dbReference>
<dbReference type="FunCoup" id="P33349">
    <property type="interactions" value="184"/>
</dbReference>
<dbReference type="STRING" id="511145.b2120"/>
<dbReference type="PaxDb" id="511145-b2120"/>
<dbReference type="EnsemblBacteria" id="AAC75181">
    <property type="protein sequence ID" value="AAC75181"/>
    <property type="gene ID" value="b2120"/>
</dbReference>
<dbReference type="GeneID" id="946651"/>
<dbReference type="KEGG" id="ecj:JW2108"/>
<dbReference type="KEGG" id="eco:b2120"/>
<dbReference type="KEGG" id="ecoc:C3026_11890"/>
<dbReference type="PATRIC" id="fig|511145.12.peg.2198"/>
<dbReference type="EchoBASE" id="EB1939"/>
<dbReference type="eggNOG" id="COG2425">
    <property type="taxonomic scope" value="Bacteria"/>
</dbReference>
<dbReference type="HOGENOM" id="CLU_009152_0_1_6"/>
<dbReference type="InParanoid" id="P33349"/>
<dbReference type="OMA" id="CGAWHAP"/>
<dbReference type="OrthoDB" id="9768066at2"/>
<dbReference type="PhylomeDB" id="P33349"/>
<dbReference type="BioCyc" id="EcoCyc:EG11999-MONOMER"/>
<dbReference type="PRO" id="PR:P33349"/>
<dbReference type="Proteomes" id="UP000000625">
    <property type="component" value="Chromosome"/>
</dbReference>
<dbReference type="GO" id="GO:0005829">
    <property type="term" value="C:cytosol"/>
    <property type="evidence" value="ECO:0000314"/>
    <property type="project" value="EcoCyc"/>
</dbReference>
<dbReference type="InterPro" id="IPR043737">
    <property type="entry name" value="DUF5682"/>
</dbReference>
<dbReference type="InterPro" id="IPR050458">
    <property type="entry name" value="LolB"/>
</dbReference>
<dbReference type="PANTHER" id="PTHR30634">
    <property type="entry name" value="OUTER MEMBRANE LOLAB LIPOPROTEIN INSERTION APPARATUS"/>
    <property type="match status" value="1"/>
</dbReference>
<dbReference type="PANTHER" id="PTHR30634:SF7">
    <property type="entry name" value="VWA DOMAIN-CONTAINING PROTEIN"/>
    <property type="match status" value="1"/>
</dbReference>
<dbReference type="Pfam" id="PF18934">
    <property type="entry name" value="DUF5682"/>
    <property type="match status" value="1"/>
</dbReference>
<protein>
    <recommendedName>
        <fullName>Uncharacterized protein YehM</fullName>
    </recommendedName>
</protein>
<feature type="chain" id="PRO_0000169134" description="Uncharacterized protein YehM">
    <location>
        <begin position="1"/>
        <end position="759"/>
    </location>
</feature>